<comment type="subcellular location">
    <subcellularLocation>
        <location evidence="2">Endoplasmic reticulum membrane</location>
        <topology evidence="2">Multi-pass membrane protein</topology>
    </subcellularLocation>
</comment>
<comment type="similarity">
    <text evidence="3">Belongs to the 1-acyl-sn-glycerol-3-phosphate acyltransferase family.</text>
</comment>
<feature type="chain" id="PRO_0000317311" description="Uncharacterized acyltransferase C428.14">
    <location>
        <begin position="1"/>
        <end position="350"/>
    </location>
</feature>
<feature type="transmembrane region" description="Helical" evidence="1">
    <location>
        <begin position="10"/>
        <end position="30"/>
    </location>
</feature>
<feature type="transmembrane region" description="Helical" evidence="1">
    <location>
        <begin position="51"/>
        <end position="71"/>
    </location>
</feature>
<feature type="transmembrane region" description="Helical" evidence="1">
    <location>
        <begin position="327"/>
        <end position="347"/>
    </location>
</feature>
<dbReference type="EC" id="2.3.-.-"/>
<dbReference type="EMBL" id="CU329671">
    <property type="protein sequence ID" value="CAA22289.1"/>
    <property type="molecule type" value="Genomic_DNA"/>
</dbReference>
<dbReference type="PIR" id="T40466">
    <property type="entry name" value="T40466"/>
</dbReference>
<dbReference type="BioGRID" id="277363">
    <property type="interactions" value="6"/>
</dbReference>
<dbReference type="FunCoup" id="O94361">
    <property type="interactions" value="372"/>
</dbReference>
<dbReference type="IntAct" id="O94361">
    <property type="interactions" value="1"/>
</dbReference>
<dbReference type="STRING" id="284812.O94361"/>
<dbReference type="iPTMnet" id="O94361"/>
<dbReference type="PaxDb" id="4896-SPBC428.14.1"/>
<dbReference type="EnsemblFungi" id="SPBC428.14.1">
    <property type="protein sequence ID" value="SPBC428.14.1:pep"/>
    <property type="gene ID" value="SPBC428.14"/>
</dbReference>
<dbReference type="KEGG" id="spo:2540846"/>
<dbReference type="PomBase" id="SPBC428.14"/>
<dbReference type="VEuPathDB" id="FungiDB:SPBC428.14"/>
<dbReference type="eggNOG" id="KOG1505">
    <property type="taxonomic scope" value="Eukaryota"/>
</dbReference>
<dbReference type="HOGENOM" id="CLU_041844_3_0_1"/>
<dbReference type="InParanoid" id="O94361"/>
<dbReference type="OMA" id="RMVMIAN"/>
<dbReference type="PhylomeDB" id="O94361"/>
<dbReference type="Reactome" id="R-SPO-1482798">
    <property type="pathway name" value="Acyl chain remodeling of CL"/>
</dbReference>
<dbReference type="Reactome" id="R-SPO-1482925">
    <property type="pathway name" value="Acyl chain remodelling of PG"/>
</dbReference>
<dbReference type="Reactome" id="R-SPO-1483166">
    <property type="pathway name" value="Synthesis of PA"/>
</dbReference>
<dbReference type="PRO" id="PR:O94361"/>
<dbReference type="Proteomes" id="UP000002485">
    <property type="component" value="Chromosome II"/>
</dbReference>
<dbReference type="GO" id="GO:0005737">
    <property type="term" value="C:cytoplasm"/>
    <property type="evidence" value="ECO:0007005"/>
    <property type="project" value="PomBase"/>
</dbReference>
<dbReference type="GO" id="GO:0012505">
    <property type="term" value="C:endomembrane system"/>
    <property type="evidence" value="ECO:0000318"/>
    <property type="project" value="GO_Central"/>
</dbReference>
<dbReference type="GO" id="GO:0005783">
    <property type="term" value="C:endoplasmic reticulum"/>
    <property type="evidence" value="ECO:0007005"/>
    <property type="project" value="PomBase"/>
</dbReference>
<dbReference type="GO" id="GO:0005789">
    <property type="term" value="C:endoplasmic reticulum membrane"/>
    <property type="evidence" value="ECO:0007669"/>
    <property type="project" value="UniProtKB-SubCell"/>
</dbReference>
<dbReference type="GO" id="GO:0016411">
    <property type="term" value="F:acylglycerol O-acyltransferase activity"/>
    <property type="evidence" value="ECO:0000250"/>
    <property type="project" value="PomBase"/>
</dbReference>
<dbReference type="GO" id="GO:0016746">
    <property type="term" value="F:acyltransferase activity"/>
    <property type="evidence" value="ECO:0000318"/>
    <property type="project" value="GO_Central"/>
</dbReference>
<dbReference type="GO" id="GO:0036149">
    <property type="term" value="P:phosphatidylinositol acyl-chain remodeling"/>
    <property type="evidence" value="ECO:0000318"/>
    <property type="project" value="GO_Central"/>
</dbReference>
<dbReference type="GO" id="GO:0008654">
    <property type="term" value="P:phospholipid biosynthetic process"/>
    <property type="evidence" value="ECO:0000266"/>
    <property type="project" value="PomBase"/>
</dbReference>
<dbReference type="CDD" id="cd07990">
    <property type="entry name" value="LPLAT_LCLAT1-like"/>
    <property type="match status" value="1"/>
</dbReference>
<dbReference type="InterPro" id="IPR032098">
    <property type="entry name" value="Acyltransf_C"/>
</dbReference>
<dbReference type="InterPro" id="IPR002123">
    <property type="entry name" value="Plipid/glycerol_acylTrfase"/>
</dbReference>
<dbReference type="PANTHER" id="PTHR10983">
    <property type="entry name" value="1-ACYLGLYCEROL-3-PHOSPHATE ACYLTRANSFERASE-RELATED"/>
    <property type="match status" value="1"/>
</dbReference>
<dbReference type="PANTHER" id="PTHR10983:SF16">
    <property type="entry name" value="LYSOCARDIOLIPIN ACYLTRANSFERASE 1"/>
    <property type="match status" value="1"/>
</dbReference>
<dbReference type="Pfam" id="PF16076">
    <property type="entry name" value="Acyltransf_C"/>
    <property type="match status" value="1"/>
</dbReference>
<dbReference type="Pfam" id="PF01553">
    <property type="entry name" value="Acyltransferase"/>
    <property type="match status" value="1"/>
</dbReference>
<dbReference type="SMART" id="SM00563">
    <property type="entry name" value="PlsC"/>
    <property type="match status" value="1"/>
</dbReference>
<dbReference type="SUPFAM" id="SSF69593">
    <property type="entry name" value="Glycerol-3-phosphate (1)-acyltransferase"/>
    <property type="match status" value="1"/>
</dbReference>
<proteinExistence type="inferred from homology"/>
<protein>
    <recommendedName>
        <fullName>Uncharacterized acyltransferase C428.14</fullName>
        <ecNumber>2.3.-.-</ecNumber>
    </recommendedName>
</protein>
<organism>
    <name type="scientific">Schizosaccharomyces pombe (strain 972 / ATCC 24843)</name>
    <name type="common">Fission yeast</name>
    <dbReference type="NCBI Taxonomy" id="284812"/>
    <lineage>
        <taxon>Eukaryota</taxon>
        <taxon>Fungi</taxon>
        <taxon>Dikarya</taxon>
        <taxon>Ascomycota</taxon>
        <taxon>Taphrinomycotina</taxon>
        <taxon>Schizosaccharomycetes</taxon>
        <taxon>Schizosaccharomycetales</taxon>
        <taxon>Schizosaccharomycetaceae</taxon>
        <taxon>Schizosaccharomyces</taxon>
    </lineage>
</organism>
<accession>O94361</accession>
<gene>
    <name type="ORF">SPBC428.14</name>
</gene>
<reference key="1">
    <citation type="journal article" date="2002" name="Nature">
        <title>The genome sequence of Schizosaccharomyces pombe.</title>
        <authorList>
            <person name="Wood V."/>
            <person name="Gwilliam R."/>
            <person name="Rajandream M.A."/>
            <person name="Lyne M.H."/>
            <person name="Lyne R."/>
            <person name="Stewart A."/>
            <person name="Sgouros J.G."/>
            <person name="Peat N."/>
            <person name="Hayles J."/>
            <person name="Baker S.G."/>
            <person name="Basham D."/>
            <person name="Bowman S."/>
            <person name="Brooks K."/>
            <person name="Brown D."/>
            <person name="Brown S."/>
            <person name="Chillingworth T."/>
            <person name="Churcher C.M."/>
            <person name="Collins M."/>
            <person name="Connor R."/>
            <person name="Cronin A."/>
            <person name="Davis P."/>
            <person name="Feltwell T."/>
            <person name="Fraser A."/>
            <person name="Gentles S."/>
            <person name="Goble A."/>
            <person name="Hamlin N."/>
            <person name="Harris D.E."/>
            <person name="Hidalgo J."/>
            <person name="Hodgson G."/>
            <person name="Holroyd S."/>
            <person name="Hornsby T."/>
            <person name="Howarth S."/>
            <person name="Huckle E.J."/>
            <person name="Hunt S."/>
            <person name="Jagels K."/>
            <person name="James K.D."/>
            <person name="Jones L."/>
            <person name="Jones M."/>
            <person name="Leather S."/>
            <person name="McDonald S."/>
            <person name="McLean J."/>
            <person name="Mooney P."/>
            <person name="Moule S."/>
            <person name="Mungall K.L."/>
            <person name="Murphy L.D."/>
            <person name="Niblett D."/>
            <person name="Odell C."/>
            <person name="Oliver K."/>
            <person name="O'Neil S."/>
            <person name="Pearson D."/>
            <person name="Quail M.A."/>
            <person name="Rabbinowitsch E."/>
            <person name="Rutherford K.M."/>
            <person name="Rutter S."/>
            <person name="Saunders D."/>
            <person name="Seeger K."/>
            <person name="Sharp S."/>
            <person name="Skelton J."/>
            <person name="Simmonds M.N."/>
            <person name="Squares R."/>
            <person name="Squares S."/>
            <person name="Stevens K."/>
            <person name="Taylor K."/>
            <person name="Taylor R.G."/>
            <person name="Tivey A."/>
            <person name="Walsh S.V."/>
            <person name="Warren T."/>
            <person name="Whitehead S."/>
            <person name="Woodward J.R."/>
            <person name="Volckaert G."/>
            <person name="Aert R."/>
            <person name="Robben J."/>
            <person name="Grymonprez B."/>
            <person name="Weltjens I."/>
            <person name="Vanstreels E."/>
            <person name="Rieger M."/>
            <person name="Schaefer M."/>
            <person name="Mueller-Auer S."/>
            <person name="Gabel C."/>
            <person name="Fuchs M."/>
            <person name="Duesterhoeft A."/>
            <person name="Fritzc C."/>
            <person name="Holzer E."/>
            <person name="Moestl D."/>
            <person name="Hilbert H."/>
            <person name="Borzym K."/>
            <person name="Langer I."/>
            <person name="Beck A."/>
            <person name="Lehrach H."/>
            <person name="Reinhardt R."/>
            <person name="Pohl T.M."/>
            <person name="Eger P."/>
            <person name="Zimmermann W."/>
            <person name="Wedler H."/>
            <person name="Wambutt R."/>
            <person name="Purnelle B."/>
            <person name="Goffeau A."/>
            <person name="Cadieu E."/>
            <person name="Dreano S."/>
            <person name="Gloux S."/>
            <person name="Lelaure V."/>
            <person name="Mottier S."/>
            <person name="Galibert F."/>
            <person name="Aves S.J."/>
            <person name="Xiang Z."/>
            <person name="Hunt C."/>
            <person name="Moore K."/>
            <person name="Hurst S.M."/>
            <person name="Lucas M."/>
            <person name="Rochet M."/>
            <person name="Gaillardin C."/>
            <person name="Tallada V.A."/>
            <person name="Garzon A."/>
            <person name="Thode G."/>
            <person name="Daga R.R."/>
            <person name="Cruzado L."/>
            <person name="Jimenez J."/>
            <person name="Sanchez M."/>
            <person name="del Rey F."/>
            <person name="Benito J."/>
            <person name="Dominguez A."/>
            <person name="Revuelta J.L."/>
            <person name="Moreno S."/>
            <person name="Armstrong J."/>
            <person name="Forsburg S.L."/>
            <person name="Cerutti L."/>
            <person name="Lowe T."/>
            <person name="McCombie W.R."/>
            <person name="Paulsen I."/>
            <person name="Potashkin J."/>
            <person name="Shpakovski G.V."/>
            <person name="Ussery D."/>
            <person name="Barrell B.G."/>
            <person name="Nurse P."/>
        </authorList>
    </citation>
    <scope>NUCLEOTIDE SEQUENCE [LARGE SCALE GENOMIC DNA]</scope>
    <source>
        <strain>972 / ATCC 24843</strain>
    </source>
</reference>
<reference key="2">
    <citation type="journal article" date="2006" name="Nat. Biotechnol.">
        <title>ORFeome cloning and global analysis of protein localization in the fission yeast Schizosaccharomyces pombe.</title>
        <authorList>
            <person name="Matsuyama A."/>
            <person name="Arai R."/>
            <person name="Yashiroda Y."/>
            <person name="Shirai A."/>
            <person name="Kamata A."/>
            <person name="Sekido S."/>
            <person name="Kobayashi Y."/>
            <person name="Hashimoto A."/>
            <person name="Hamamoto M."/>
            <person name="Hiraoka Y."/>
            <person name="Horinouchi S."/>
            <person name="Yoshida M."/>
        </authorList>
    </citation>
    <scope>SUBCELLULAR LOCATION [LARGE SCALE ANALYSIS]</scope>
</reference>
<evidence type="ECO:0000255" key="1"/>
<evidence type="ECO:0000269" key="2">
    <source>
    </source>
</evidence>
<evidence type="ECO:0000305" key="3"/>
<name>YHOE_SCHPO</name>
<sequence>MTCRIAIRKYSFILCLAVGSVTIYTSEVIGTPLYFVNKELYNKYIAFTKSFAGILFTALVQLFSPTPVTLTYDPELRNLFYLDRNGCLETIAAERNIVIANHQLYSDWMYVWWLSYTAKQHGHVYIMLKNSLKWLPVIGWGMQLFRFIFLSRKWDKDYETMSRHFKFIRNVRDSVSLILFPEGTNLVESTYQRSRVYADKIGVKMPKHLMLPRVRGLFYSISQLRDSMTYLYDYTFYFSDPSPKKYAADAFSLPKLFFEGVPIKRLHIHVRRFPISEIPTEEDQFTDWLYQRWYEKDKLIDTLLETGNFPGPKKLHTTVRLKHRLEILSLFSVLFTCIVAGLFLKLFISH</sequence>
<keyword id="KW-0012">Acyltransferase</keyword>
<keyword id="KW-0256">Endoplasmic reticulum</keyword>
<keyword id="KW-0472">Membrane</keyword>
<keyword id="KW-1185">Reference proteome</keyword>
<keyword id="KW-0808">Transferase</keyword>
<keyword id="KW-0812">Transmembrane</keyword>
<keyword id="KW-1133">Transmembrane helix</keyword>